<reference key="1">
    <citation type="journal article" date="2004" name="Nature">
        <title>Genome evolution in yeasts.</title>
        <authorList>
            <person name="Dujon B."/>
            <person name="Sherman D."/>
            <person name="Fischer G."/>
            <person name="Durrens P."/>
            <person name="Casaregola S."/>
            <person name="Lafontaine I."/>
            <person name="de Montigny J."/>
            <person name="Marck C."/>
            <person name="Neuveglise C."/>
            <person name="Talla E."/>
            <person name="Goffard N."/>
            <person name="Frangeul L."/>
            <person name="Aigle M."/>
            <person name="Anthouard V."/>
            <person name="Babour A."/>
            <person name="Barbe V."/>
            <person name="Barnay S."/>
            <person name="Blanchin S."/>
            <person name="Beckerich J.-M."/>
            <person name="Beyne E."/>
            <person name="Bleykasten C."/>
            <person name="Boisrame A."/>
            <person name="Boyer J."/>
            <person name="Cattolico L."/>
            <person name="Confanioleri F."/>
            <person name="de Daruvar A."/>
            <person name="Despons L."/>
            <person name="Fabre E."/>
            <person name="Fairhead C."/>
            <person name="Ferry-Dumazet H."/>
            <person name="Groppi A."/>
            <person name="Hantraye F."/>
            <person name="Hennequin C."/>
            <person name="Jauniaux N."/>
            <person name="Joyet P."/>
            <person name="Kachouri R."/>
            <person name="Kerrest A."/>
            <person name="Koszul R."/>
            <person name="Lemaire M."/>
            <person name="Lesur I."/>
            <person name="Ma L."/>
            <person name="Muller H."/>
            <person name="Nicaud J.-M."/>
            <person name="Nikolski M."/>
            <person name="Oztas S."/>
            <person name="Ozier-Kalogeropoulos O."/>
            <person name="Pellenz S."/>
            <person name="Potier S."/>
            <person name="Richard G.-F."/>
            <person name="Straub M.-L."/>
            <person name="Suleau A."/>
            <person name="Swennen D."/>
            <person name="Tekaia F."/>
            <person name="Wesolowski-Louvel M."/>
            <person name="Westhof E."/>
            <person name="Wirth B."/>
            <person name="Zeniou-Meyer M."/>
            <person name="Zivanovic Y."/>
            <person name="Bolotin-Fukuhara M."/>
            <person name="Thierry A."/>
            <person name="Bouchier C."/>
            <person name="Caudron B."/>
            <person name="Scarpelli C."/>
            <person name="Gaillardin C."/>
            <person name="Weissenbach J."/>
            <person name="Wincker P."/>
            <person name="Souciet J.-L."/>
        </authorList>
    </citation>
    <scope>NUCLEOTIDE SEQUENCE [LARGE SCALE GENOMIC DNA]</scope>
    <source>
        <strain>ATCC 8585 / CBS 2359 / DSM 70799 / NBRC 1267 / NRRL Y-1140 / WM37</strain>
    </source>
</reference>
<gene>
    <name type="primary">RTC5</name>
    <name type="ordered locus">KLLA0E21143g</name>
</gene>
<accession>Q6CMD3</accession>
<protein>
    <recommendedName>
        <fullName>Restriction of telomere capping protein 5</fullName>
    </recommendedName>
</protein>
<proteinExistence type="inferred from homology"/>
<sequence>MGQSTSKEHENARTNESKLKGESLMDFFNDRCLKQLTTAELISFKNNIPEGKELNDYVEVSDISRMYYIPKDSAVMLSVFMNMFHTLANFPLLQDSYEKVTFKTLLKATLLLVKERAIKYTDWKKYNDLKMLFITLSLEKNIKAEPLMDSSALSDCKDWKGVIRSYNGTDFDELKVNANNLLHFLALILALSRCCILNNCKIDNDVLAKSLEDFKHQALNIVRTMNPEIISMSDCLDSSITYTQFSMAVNDVAPNLLNPLKMLMEHVLYMDRDLVDADVLQPISNPTKIVNESELSQLATFLPKEIVFSRFQKLYVGRESGFSMRSFQSKVFKWMAPTILFVEGMRIRDEDDEDGDAYAVKNPRYRNFLQEYGKLKSEDQHLDTLSKKKRKLLFAVCIRDPWKVSNKDLFGDSSTKIIQLHPRQEIFDADPFKTGNVYFNTVGGGIGIGSSQPIIKANGKKYFPGNVSLTIDSSLEFGIFRHLGAGGSFKPGRLISGRGEERNSFEYRFIIQDVEVWGCGGEKELEEQVKQWQWEEAEAKRRQKINLQSMGEDRALLEMAGLVGQHQSGGSI</sequence>
<dbReference type="EMBL" id="CR382125">
    <property type="protein sequence ID" value="CAG99993.1"/>
    <property type="molecule type" value="Genomic_DNA"/>
</dbReference>
<dbReference type="RefSeq" id="XP_454906.1">
    <property type="nucleotide sequence ID" value="XM_454906.1"/>
</dbReference>
<dbReference type="SMR" id="Q6CMD3"/>
<dbReference type="FunCoup" id="Q6CMD3">
    <property type="interactions" value="18"/>
</dbReference>
<dbReference type="STRING" id="284590.Q6CMD3"/>
<dbReference type="PaxDb" id="284590-Q6CMD3"/>
<dbReference type="KEGG" id="kla:KLLA0_E21143g"/>
<dbReference type="eggNOG" id="ENOG502QV3R">
    <property type="taxonomic scope" value="Eukaryota"/>
</dbReference>
<dbReference type="HOGENOM" id="CLU_011918_1_0_1"/>
<dbReference type="InParanoid" id="Q6CMD3"/>
<dbReference type="OMA" id="KWEFEAR"/>
<dbReference type="Proteomes" id="UP000000598">
    <property type="component" value="Chromosome E"/>
</dbReference>
<dbReference type="GO" id="GO:0005737">
    <property type="term" value="C:cytoplasm"/>
    <property type="evidence" value="ECO:0007669"/>
    <property type="project" value="UniProtKB-SubCell"/>
</dbReference>
<dbReference type="InterPro" id="IPR006571">
    <property type="entry name" value="TLDc_dom"/>
</dbReference>
<dbReference type="Pfam" id="PF07534">
    <property type="entry name" value="TLD"/>
    <property type="match status" value="1"/>
</dbReference>
<dbReference type="SMART" id="SM00584">
    <property type="entry name" value="TLDc"/>
    <property type="match status" value="1"/>
</dbReference>
<dbReference type="PROSITE" id="PS51886">
    <property type="entry name" value="TLDC"/>
    <property type="match status" value="1"/>
</dbReference>
<evidence type="ECO:0000250" key="1"/>
<evidence type="ECO:0000255" key="2">
    <source>
        <dbReference type="PROSITE-ProRule" id="PRU01234"/>
    </source>
</evidence>
<evidence type="ECO:0000305" key="3"/>
<feature type="chain" id="PRO_0000408826" description="Restriction of telomere capping protein 5">
    <location>
        <begin position="1"/>
        <end position="572"/>
    </location>
</feature>
<feature type="domain" description="TLDc" evidence="2">
    <location>
        <begin position="288"/>
        <end position="520"/>
    </location>
</feature>
<comment type="function">
    <text evidence="1">May be involved in a process influencing telomere capping.</text>
</comment>
<comment type="subcellular location">
    <subcellularLocation>
        <location evidence="1">Cytoplasm</location>
    </subcellularLocation>
</comment>
<comment type="similarity">
    <text evidence="3">Belongs to the RTC5 family.</text>
</comment>
<keyword id="KW-0963">Cytoplasm</keyword>
<keyword id="KW-1185">Reference proteome</keyword>
<name>RTC5_KLULA</name>
<organism>
    <name type="scientific">Kluyveromyces lactis (strain ATCC 8585 / CBS 2359 / DSM 70799 / NBRC 1267 / NRRL Y-1140 / WM37)</name>
    <name type="common">Yeast</name>
    <name type="synonym">Candida sphaerica</name>
    <dbReference type="NCBI Taxonomy" id="284590"/>
    <lineage>
        <taxon>Eukaryota</taxon>
        <taxon>Fungi</taxon>
        <taxon>Dikarya</taxon>
        <taxon>Ascomycota</taxon>
        <taxon>Saccharomycotina</taxon>
        <taxon>Saccharomycetes</taxon>
        <taxon>Saccharomycetales</taxon>
        <taxon>Saccharomycetaceae</taxon>
        <taxon>Kluyveromyces</taxon>
    </lineage>
</organism>